<accession>Q1CEF3</accession>
<accession>C4GY13</accession>
<dbReference type="EMBL" id="CP000305">
    <property type="protein sequence ID" value="ABG19627.1"/>
    <property type="molecule type" value="Genomic_DNA"/>
</dbReference>
<dbReference type="EMBL" id="ACNQ01000017">
    <property type="protein sequence ID" value="EEO75813.1"/>
    <property type="molecule type" value="Genomic_DNA"/>
</dbReference>
<dbReference type="RefSeq" id="WP_002209148.1">
    <property type="nucleotide sequence ID" value="NZ_ACNQ01000017.1"/>
</dbReference>
<dbReference type="SMR" id="Q1CEF3"/>
<dbReference type="GeneID" id="57974236"/>
<dbReference type="KEGG" id="ypn:YPN_3300"/>
<dbReference type="HOGENOM" id="CLU_004131_5_1_6"/>
<dbReference type="Proteomes" id="UP000008936">
    <property type="component" value="Chromosome"/>
</dbReference>
<dbReference type="GO" id="GO:0032300">
    <property type="term" value="C:mismatch repair complex"/>
    <property type="evidence" value="ECO:0007669"/>
    <property type="project" value="InterPro"/>
</dbReference>
<dbReference type="GO" id="GO:0005524">
    <property type="term" value="F:ATP binding"/>
    <property type="evidence" value="ECO:0007669"/>
    <property type="project" value="InterPro"/>
</dbReference>
<dbReference type="GO" id="GO:0016887">
    <property type="term" value="F:ATP hydrolysis activity"/>
    <property type="evidence" value="ECO:0007669"/>
    <property type="project" value="InterPro"/>
</dbReference>
<dbReference type="GO" id="GO:0140664">
    <property type="term" value="F:ATP-dependent DNA damage sensor activity"/>
    <property type="evidence" value="ECO:0007669"/>
    <property type="project" value="InterPro"/>
</dbReference>
<dbReference type="GO" id="GO:0030983">
    <property type="term" value="F:mismatched DNA binding"/>
    <property type="evidence" value="ECO:0007669"/>
    <property type="project" value="InterPro"/>
</dbReference>
<dbReference type="GO" id="GO:0006298">
    <property type="term" value="P:mismatch repair"/>
    <property type="evidence" value="ECO:0007669"/>
    <property type="project" value="UniProtKB-UniRule"/>
</dbReference>
<dbReference type="CDD" id="cd16926">
    <property type="entry name" value="HATPase_MutL-MLH-PMS-like"/>
    <property type="match status" value="1"/>
</dbReference>
<dbReference type="CDD" id="cd03482">
    <property type="entry name" value="MutL_Trans_MutL"/>
    <property type="match status" value="1"/>
</dbReference>
<dbReference type="FunFam" id="3.30.230.10:FF:000013">
    <property type="entry name" value="DNA mismatch repair endonuclease MutL"/>
    <property type="match status" value="1"/>
</dbReference>
<dbReference type="FunFam" id="3.30.565.10:FF:000003">
    <property type="entry name" value="DNA mismatch repair endonuclease MutL"/>
    <property type="match status" value="1"/>
</dbReference>
<dbReference type="FunFam" id="3.30.1370.100:FF:000002">
    <property type="entry name" value="DNA mismatch repair protein MutL"/>
    <property type="match status" value="1"/>
</dbReference>
<dbReference type="Gene3D" id="3.30.230.10">
    <property type="match status" value="1"/>
</dbReference>
<dbReference type="Gene3D" id="3.30.565.10">
    <property type="entry name" value="Histidine kinase-like ATPase, C-terminal domain"/>
    <property type="match status" value="1"/>
</dbReference>
<dbReference type="Gene3D" id="3.30.1540.20">
    <property type="entry name" value="MutL, C-terminal domain, dimerisation subdomain"/>
    <property type="match status" value="1"/>
</dbReference>
<dbReference type="Gene3D" id="3.30.1370.100">
    <property type="entry name" value="MutL, C-terminal domain, regulatory subdomain"/>
    <property type="match status" value="1"/>
</dbReference>
<dbReference type="HAMAP" id="MF_00149">
    <property type="entry name" value="DNA_mis_repair"/>
    <property type="match status" value="1"/>
</dbReference>
<dbReference type="InterPro" id="IPR014762">
    <property type="entry name" value="DNA_mismatch_repair_CS"/>
</dbReference>
<dbReference type="InterPro" id="IPR020667">
    <property type="entry name" value="DNA_mismatch_repair_MutL"/>
</dbReference>
<dbReference type="InterPro" id="IPR013507">
    <property type="entry name" value="DNA_mismatch_S5_2-like"/>
</dbReference>
<dbReference type="InterPro" id="IPR036890">
    <property type="entry name" value="HATPase_C_sf"/>
</dbReference>
<dbReference type="InterPro" id="IPR002099">
    <property type="entry name" value="MutL/Mlh/PMS"/>
</dbReference>
<dbReference type="InterPro" id="IPR038973">
    <property type="entry name" value="MutL/Mlh/Pms-like"/>
</dbReference>
<dbReference type="InterPro" id="IPR014790">
    <property type="entry name" value="MutL_C"/>
</dbReference>
<dbReference type="InterPro" id="IPR042120">
    <property type="entry name" value="MutL_C_dimsub"/>
</dbReference>
<dbReference type="InterPro" id="IPR042121">
    <property type="entry name" value="MutL_C_regsub"/>
</dbReference>
<dbReference type="InterPro" id="IPR037198">
    <property type="entry name" value="MutL_C_sf"/>
</dbReference>
<dbReference type="InterPro" id="IPR020568">
    <property type="entry name" value="Ribosomal_Su5_D2-typ_SF"/>
</dbReference>
<dbReference type="InterPro" id="IPR014721">
    <property type="entry name" value="Ribsml_uS5_D2-typ_fold_subgr"/>
</dbReference>
<dbReference type="NCBIfam" id="TIGR00585">
    <property type="entry name" value="mutl"/>
    <property type="match status" value="1"/>
</dbReference>
<dbReference type="NCBIfam" id="NF000948">
    <property type="entry name" value="PRK00095.1-1"/>
    <property type="match status" value="1"/>
</dbReference>
<dbReference type="PANTHER" id="PTHR10073">
    <property type="entry name" value="DNA MISMATCH REPAIR PROTEIN MLH, PMS, MUTL"/>
    <property type="match status" value="1"/>
</dbReference>
<dbReference type="PANTHER" id="PTHR10073:SF12">
    <property type="entry name" value="DNA MISMATCH REPAIR PROTEIN MLH1"/>
    <property type="match status" value="1"/>
</dbReference>
<dbReference type="Pfam" id="PF01119">
    <property type="entry name" value="DNA_mis_repair"/>
    <property type="match status" value="1"/>
</dbReference>
<dbReference type="Pfam" id="PF13589">
    <property type="entry name" value="HATPase_c_3"/>
    <property type="match status" value="1"/>
</dbReference>
<dbReference type="Pfam" id="PF08676">
    <property type="entry name" value="MutL_C"/>
    <property type="match status" value="1"/>
</dbReference>
<dbReference type="SMART" id="SM01340">
    <property type="entry name" value="DNA_mis_repair"/>
    <property type="match status" value="1"/>
</dbReference>
<dbReference type="SMART" id="SM00853">
    <property type="entry name" value="MutL_C"/>
    <property type="match status" value="1"/>
</dbReference>
<dbReference type="SUPFAM" id="SSF55874">
    <property type="entry name" value="ATPase domain of HSP90 chaperone/DNA topoisomerase II/histidine kinase"/>
    <property type="match status" value="1"/>
</dbReference>
<dbReference type="SUPFAM" id="SSF118116">
    <property type="entry name" value="DNA mismatch repair protein MutL"/>
    <property type="match status" value="1"/>
</dbReference>
<dbReference type="SUPFAM" id="SSF54211">
    <property type="entry name" value="Ribosomal protein S5 domain 2-like"/>
    <property type="match status" value="1"/>
</dbReference>
<dbReference type="PROSITE" id="PS00058">
    <property type="entry name" value="DNA_MISMATCH_REPAIR_1"/>
    <property type="match status" value="1"/>
</dbReference>
<organism>
    <name type="scientific">Yersinia pestis bv. Antiqua (strain Nepal516)</name>
    <dbReference type="NCBI Taxonomy" id="377628"/>
    <lineage>
        <taxon>Bacteria</taxon>
        <taxon>Pseudomonadati</taxon>
        <taxon>Pseudomonadota</taxon>
        <taxon>Gammaproteobacteria</taxon>
        <taxon>Enterobacterales</taxon>
        <taxon>Yersiniaceae</taxon>
        <taxon>Yersinia</taxon>
    </lineage>
</organism>
<keyword id="KW-0227">DNA damage</keyword>
<keyword id="KW-0234">DNA repair</keyword>
<evidence type="ECO:0000255" key="1">
    <source>
        <dbReference type="HAMAP-Rule" id="MF_00149"/>
    </source>
</evidence>
<evidence type="ECO:0000256" key="2">
    <source>
        <dbReference type="SAM" id="MobiDB-lite"/>
    </source>
</evidence>
<gene>
    <name evidence="1" type="primary">mutL</name>
    <name type="ordered locus">YPN_3300</name>
    <name type="ORF">YP516_3749</name>
</gene>
<feature type="chain" id="PRO_1000010107" description="DNA mismatch repair protein MutL">
    <location>
        <begin position="1"/>
        <end position="635"/>
    </location>
</feature>
<feature type="region of interest" description="Disordered" evidence="2">
    <location>
        <begin position="359"/>
        <end position="399"/>
    </location>
</feature>
<feature type="compositionally biased region" description="Low complexity" evidence="2">
    <location>
        <begin position="364"/>
        <end position="377"/>
    </location>
</feature>
<feature type="compositionally biased region" description="Basic and acidic residues" evidence="2">
    <location>
        <begin position="378"/>
        <end position="399"/>
    </location>
</feature>
<proteinExistence type="inferred from homology"/>
<sequence length="635" mass="70288">MPIQILPPQLANQIAAGEVVERPASVVKELVENSLDAGATRIDIDIERGGAKLIRIRDNGCGISKDDLALALARHATSKISSLEDLEAILSMGFRGEALASISSVSRLILTSRTAEQSEAWQAYAEGRDMAVTIKPAAHPVGSTLEVLDLFYNTPARRKFMRTEKTEFGHIDEVVRRIALARFDVAINLNHNGKLIRQYRAAPDPAQHERRLASICGPAFLQHALAIAWQHGDLNIHGWVADPAASHTLSEMQYCYVNNRMMRDRLINHAIRQAYQDRLNDAQQPAYVLYLDIDPHQVDVNVHPAKHEVRFHQARLVHDFIYQAVTAVLQQTNAPILNISEEGEVDAPRWQQENRVAAGTNKYAQPEAAKSSAAEQAVARERSSARERAAPAYKEDHPYQKQQGELYRQLLQPSAAAKPATSPAAIPASSVSSPSIPVQRITQAEEPLHGDNYSFGRVLTVFPPCYALIEYQGGVALLSLAVAERWLKQAQLSPPEEGLRPQPLLIPLKITLDKNEIAACQNHEKLLITMGIELSVEQGRATLRAVSLPLRQQNLQKLIPELLGYLSQHEEISPDTLATWLARHLGSEHEVWNVSQAIQLLTEVERLCPQLVQSPPAGLLQPIDIKAALATLTHE</sequence>
<protein>
    <recommendedName>
        <fullName evidence="1">DNA mismatch repair protein MutL</fullName>
    </recommendedName>
</protein>
<name>MUTL_YERPN</name>
<comment type="function">
    <text evidence="1">This protein is involved in the repair of mismatches in DNA. It is required for dam-dependent methyl-directed DNA mismatch repair. May act as a 'molecular matchmaker', a protein that promotes the formation of a stable complex between two or more DNA-binding proteins in an ATP-dependent manner without itself being part of a final effector complex.</text>
</comment>
<comment type="similarity">
    <text evidence="1">Belongs to the DNA mismatch repair MutL/HexB family.</text>
</comment>
<reference key="1">
    <citation type="journal article" date="2006" name="J. Bacteriol.">
        <title>Complete genome sequence of Yersinia pestis strains Antiqua and Nepal516: evidence of gene reduction in an emerging pathogen.</title>
        <authorList>
            <person name="Chain P.S.G."/>
            <person name="Hu P."/>
            <person name="Malfatti S.A."/>
            <person name="Radnedge L."/>
            <person name="Larimer F."/>
            <person name="Vergez L.M."/>
            <person name="Worsham P."/>
            <person name="Chu M.C."/>
            <person name="Andersen G.L."/>
        </authorList>
    </citation>
    <scope>NUCLEOTIDE SEQUENCE [LARGE SCALE GENOMIC DNA]</scope>
    <source>
        <strain>Nepal516</strain>
    </source>
</reference>
<reference key="2">
    <citation type="submission" date="2009-04" db="EMBL/GenBank/DDBJ databases">
        <title>Yersinia pestis Nepal516A whole genome shotgun sequencing project.</title>
        <authorList>
            <person name="Plunkett G. III"/>
            <person name="Anderson B.D."/>
            <person name="Baumler D.J."/>
            <person name="Burland V."/>
            <person name="Cabot E.L."/>
            <person name="Glasner J.D."/>
            <person name="Mau B."/>
            <person name="Neeno-Eckwall E."/>
            <person name="Perna N.T."/>
            <person name="Munk A.C."/>
            <person name="Tapia R."/>
            <person name="Green L.D."/>
            <person name="Rogers Y.C."/>
            <person name="Detter J.C."/>
            <person name="Bruce D.C."/>
            <person name="Brettin T.S."/>
        </authorList>
    </citation>
    <scope>NUCLEOTIDE SEQUENCE [LARGE SCALE GENOMIC DNA]</scope>
    <source>
        <strain>Nepal516</strain>
    </source>
</reference>